<feature type="chain" id="PRO_0000219735" description="Photosystem II reaction center protein L">
    <location>
        <begin position="1"/>
        <end position="38"/>
    </location>
</feature>
<feature type="transmembrane region" description="Helical" evidence="1">
    <location>
        <begin position="17"/>
        <end position="37"/>
    </location>
</feature>
<geneLocation type="chloroplast"/>
<organism>
    <name type="scientific">Liriodendron tulipifera</name>
    <name type="common">Tuliptree</name>
    <name type="synonym">Tulip poplar</name>
    <dbReference type="NCBI Taxonomy" id="3415"/>
    <lineage>
        <taxon>Eukaryota</taxon>
        <taxon>Viridiplantae</taxon>
        <taxon>Streptophyta</taxon>
        <taxon>Embryophyta</taxon>
        <taxon>Tracheophyta</taxon>
        <taxon>Spermatophyta</taxon>
        <taxon>Magnoliopsida</taxon>
        <taxon>Magnoliidae</taxon>
        <taxon>Magnoliales</taxon>
        <taxon>Magnoliaceae</taxon>
        <taxon>Liriodendron</taxon>
    </lineage>
</organism>
<comment type="function">
    <text evidence="1">One of the components of the core complex of photosystem II (PSII). PSII is a light-driven water:plastoquinone oxidoreductase that uses light energy to abstract electrons from H(2)O, generating O(2) and a proton gradient subsequently used for ATP formation. It consists of a core antenna complex that captures photons, and an electron transfer chain that converts photonic excitation into a charge separation. This subunit is found at the monomer-monomer interface and is required for correct PSII assembly and/or dimerization.</text>
</comment>
<comment type="subunit">
    <text evidence="1">PSII is composed of 1 copy each of membrane proteins PsbA, PsbB, PsbC, PsbD, PsbE, PsbF, PsbH, PsbI, PsbJ, PsbK, PsbL, PsbM, PsbT, PsbX, PsbY, PsbZ, Psb30/Ycf12, at least 3 peripheral proteins of the oxygen-evolving complex and a large number of cofactors. It forms dimeric complexes.</text>
</comment>
<comment type="subcellular location">
    <subcellularLocation>
        <location evidence="1">Plastid</location>
        <location evidence="1">Chloroplast thylakoid membrane</location>
        <topology evidence="1">Single-pass membrane protein</topology>
    </subcellularLocation>
</comment>
<comment type="similarity">
    <text evidence="1">Belongs to the PsbL family.</text>
</comment>
<dbReference type="EMBL" id="AF123840">
    <property type="protein sequence ID" value="AAG26240.1"/>
    <property type="molecule type" value="Genomic_DNA"/>
</dbReference>
<dbReference type="EMBL" id="DQ899947">
    <property type="protein sequence ID" value="ABI32524.1"/>
    <property type="molecule type" value="Genomic_DNA"/>
</dbReference>
<dbReference type="RefSeq" id="YP_740217.1">
    <property type="nucleotide sequence ID" value="NC_008326.1"/>
</dbReference>
<dbReference type="SMR" id="Q7J1A4"/>
<dbReference type="GeneID" id="4266639"/>
<dbReference type="GO" id="GO:0009535">
    <property type="term" value="C:chloroplast thylakoid membrane"/>
    <property type="evidence" value="ECO:0007669"/>
    <property type="project" value="UniProtKB-SubCell"/>
</dbReference>
<dbReference type="GO" id="GO:0009539">
    <property type="term" value="C:photosystem II reaction center"/>
    <property type="evidence" value="ECO:0007669"/>
    <property type="project" value="InterPro"/>
</dbReference>
<dbReference type="GO" id="GO:0015979">
    <property type="term" value="P:photosynthesis"/>
    <property type="evidence" value="ECO:0007669"/>
    <property type="project" value="UniProtKB-UniRule"/>
</dbReference>
<dbReference type="HAMAP" id="MF_01317">
    <property type="entry name" value="PSII_PsbL"/>
    <property type="match status" value="1"/>
</dbReference>
<dbReference type="InterPro" id="IPR003372">
    <property type="entry name" value="PSII_PsbL"/>
</dbReference>
<dbReference type="InterPro" id="IPR037266">
    <property type="entry name" value="PSII_PsbL_sf"/>
</dbReference>
<dbReference type="NCBIfam" id="NF001972">
    <property type="entry name" value="PRK00753.1"/>
    <property type="match status" value="1"/>
</dbReference>
<dbReference type="Pfam" id="PF02419">
    <property type="entry name" value="PsbL"/>
    <property type="match status" value="1"/>
</dbReference>
<dbReference type="SUPFAM" id="SSF161017">
    <property type="entry name" value="Photosystem II reaction center protein L, PsbL"/>
    <property type="match status" value="1"/>
</dbReference>
<gene>
    <name evidence="1" type="primary">psbL</name>
</gene>
<evidence type="ECO:0000255" key="1">
    <source>
        <dbReference type="HAMAP-Rule" id="MF_01317"/>
    </source>
</evidence>
<sequence length="38" mass="4497">MTQSNPNEQNVELNRTSLYWGLLLIFVLAVLFSNYFFN</sequence>
<name>PSBL_LIRTU</name>
<protein>
    <recommendedName>
        <fullName evidence="1">Photosystem II reaction center protein L</fullName>
        <shortName evidence="1">PSII-L</shortName>
    </recommendedName>
</protein>
<proteinExistence type="inferred from homology"/>
<reference key="1">
    <citation type="journal article" date="2000" name="Am. J. Bot.">
        <title>Utility of 17 chloroplast genes for inferring the phylogeny of the basal angiosperms.</title>
        <authorList>
            <person name="Graham S.W."/>
            <person name="Olmstead R.G."/>
        </authorList>
    </citation>
    <scope>NUCLEOTIDE SEQUENCE [GENOMIC DNA]</scope>
</reference>
<reference key="2">
    <citation type="journal article" date="2006" name="BMC Evol. Biol.">
        <title>Complete plastid genome sequences of Drimys, Liriodendron, and Piper: implications for the phylogenetic relationships of magnoliids.</title>
        <authorList>
            <person name="Cai Z."/>
            <person name="Penaflor C."/>
            <person name="Kuehl J.V."/>
            <person name="Leebens-Mack J."/>
            <person name="Carlson J.E."/>
            <person name="dePamphilis C.W."/>
            <person name="Boore J.L."/>
            <person name="Jansen R.K."/>
        </authorList>
    </citation>
    <scope>NUCLEOTIDE SEQUENCE [LARGE SCALE GENOMIC DNA]</scope>
</reference>
<accession>Q7J1A4</accession>
<accession>Q0G9K4</accession>
<keyword id="KW-0150">Chloroplast</keyword>
<keyword id="KW-0472">Membrane</keyword>
<keyword id="KW-0602">Photosynthesis</keyword>
<keyword id="KW-0604">Photosystem II</keyword>
<keyword id="KW-0934">Plastid</keyword>
<keyword id="KW-0674">Reaction center</keyword>
<keyword id="KW-0793">Thylakoid</keyword>
<keyword id="KW-0812">Transmembrane</keyword>
<keyword id="KW-1133">Transmembrane helix</keyword>